<name>RS5_DICDI</name>
<gene>
    <name type="primary">rps5</name>
    <name type="ORF">DDB_G0286075</name>
</gene>
<accession>Q54MA6</accession>
<organism>
    <name type="scientific">Dictyostelium discoideum</name>
    <name type="common">Social amoeba</name>
    <dbReference type="NCBI Taxonomy" id="44689"/>
    <lineage>
        <taxon>Eukaryota</taxon>
        <taxon>Amoebozoa</taxon>
        <taxon>Evosea</taxon>
        <taxon>Eumycetozoa</taxon>
        <taxon>Dictyostelia</taxon>
        <taxon>Dictyosteliales</taxon>
        <taxon>Dictyosteliaceae</taxon>
        <taxon>Dictyostelium</taxon>
    </lineage>
</organism>
<evidence type="ECO:0000250" key="1">
    <source>
        <dbReference type="UniProtKB" id="P46782"/>
    </source>
</evidence>
<evidence type="ECO:0000250" key="2">
    <source>
        <dbReference type="UniProtKB" id="P97461"/>
    </source>
</evidence>
<evidence type="ECO:0000269" key="3">
    <source ref="2"/>
</evidence>
<evidence type="ECO:0000305" key="4"/>
<comment type="function">
    <text evidence="1 2">Component of the small ribosomal subunit. The ribosome is a large ribonucleoprotein complex responsible for the synthesis of proteins in the cell (By similarity). Part of the small subunit (SSU) processome, first precursor of the small eukaryotic ribosomal subunit. During the assembly of the SSU processome in the nucleolus, many ribosome biogenesis factors, an RNA chaperone and ribosomal proteins associate with the nascent pre-rRNA and work in concert to generate RNA folding, modifications, rearrangements and cleavage as well as targeted degradation of pre-ribosomal RNA by the RNA exosome (By similarity).</text>
</comment>
<comment type="subunit">
    <text evidence="1 2">Component of the small ribosomal subunit (By similarity). Part of the small subunit (SSU) processome, composed of more than 70 proteins and the RNA chaperone small nucleolar RNA (snoRNA) U3 (By similarity).</text>
</comment>
<comment type="subcellular location">
    <subcellularLocation>
        <location evidence="2">Cytoplasm</location>
    </subcellularLocation>
    <subcellularLocation>
        <location evidence="1">Nucleus</location>
        <location evidence="1">Nucleolus</location>
    </subcellularLocation>
</comment>
<comment type="similarity">
    <text evidence="4">Belongs to the universal ribosomal protein uS7 family.</text>
</comment>
<feature type="initiator methionine" description="Removed" evidence="3">
    <location>
        <position position="1"/>
    </location>
</feature>
<feature type="chain" id="PRO_0000320218" description="Small ribosomal subunit protein uS7">
    <location>
        <begin position="2"/>
        <end position="190"/>
    </location>
</feature>
<feature type="modified residue" description="N-acetylthreonine" evidence="3">
    <location>
        <position position="2"/>
    </location>
</feature>
<reference key="1">
    <citation type="journal article" date="2005" name="Nature">
        <title>The genome of the social amoeba Dictyostelium discoideum.</title>
        <authorList>
            <person name="Eichinger L."/>
            <person name="Pachebat J.A."/>
            <person name="Gloeckner G."/>
            <person name="Rajandream M.A."/>
            <person name="Sucgang R."/>
            <person name="Berriman M."/>
            <person name="Song J."/>
            <person name="Olsen R."/>
            <person name="Szafranski K."/>
            <person name="Xu Q."/>
            <person name="Tunggal B."/>
            <person name="Kummerfeld S."/>
            <person name="Madera M."/>
            <person name="Konfortov B.A."/>
            <person name="Rivero F."/>
            <person name="Bankier A.T."/>
            <person name="Lehmann R."/>
            <person name="Hamlin N."/>
            <person name="Davies R."/>
            <person name="Gaudet P."/>
            <person name="Fey P."/>
            <person name="Pilcher K."/>
            <person name="Chen G."/>
            <person name="Saunders D."/>
            <person name="Sodergren E.J."/>
            <person name="Davis P."/>
            <person name="Kerhornou A."/>
            <person name="Nie X."/>
            <person name="Hall N."/>
            <person name="Anjard C."/>
            <person name="Hemphill L."/>
            <person name="Bason N."/>
            <person name="Farbrother P."/>
            <person name="Desany B."/>
            <person name="Just E."/>
            <person name="Morio T."/>
            <person name="Rost R."/>
            <person name="Churcher C.M."/>
            <person name="Cooper J."/>
            <person name="Haydock S."/>
            <person name="van Driessche N."/>
            <person name="Cronin A."/>
            <person name="Goodhead I."/>
            <person name="Muzny D.M."/>
            <person name="Mourier T."/>
            <person name="Pain A."/>
            <person name="Lu M."/>
            <person name="Harper D."/>
            <person name="Lindsay R."/>
            <person name="Hauser H."/>
            <person name="James K.D."/>
            <person name="Quiles M."/>
            <person name="Madan Babu M."/>
            <person name="Saito T."/>
            <person name="Buchrieser C."/>
            <person name="Wardroper A."/>
            <person name="Felder M."/>
            <person name="Thangavelu M."/>
            <person name="Johnson D."/>
            <person name="Knights A."/>
            <person name="Loulseged H."/>
            <person name="Mungall K.L."/>
            <person name="Oliver K."/>
            <person name="Price C."/>
            <person name="Quail M.A."/>
            <person name="Urushihara H."/>
            <person name="Hernandez J."/>
            <person name="Rabbinowitsch E."/>
            <person name="Steffen D."/>
            <person name="Sanders M."/>
            <person name="Ma J."/>
            <person name="Kohara Y."/>
            <person name="Sharp S."/>
            <person name="Simmonds M.N."/>
            <person name="Spiegler S."/>
            <person name="Tivey A."/>
            <person name="Sugano S."/>
            <person name="White B."/>
            <person name="Walker D."/>
            <person name="Woodward J.R."/>
            <person name="Winckler T."/>
            <person name="Tanaka Y."/>
            <person name="Shaulsky G."/>
            <person name="Schleicher M."/>
            <person name="Weinstock G.M."/>
            <person name="Rosenthal A."/>
            <person name="Cox E.C."/>
            <person name="Chisholm R.L."/>
            <person name="Gibbs R.A."/>
            <person name="Loomis W.F."/>
            <person name="Platzer M."/>
            <person name="Kay R.R."/>
            <person name="Williams J.G."/>
            <person name="Dear P.H."/>
            <person name="Noegel A.A."/>
            <person name="Barrell B.G."/>
            <person name="Kuspa A."/>
        </authorList>
    </citation>
    <scope>NUCLEOTIDE SEQUENCE [LARGE SCALE GENOMIC DNA]</scope>
    <source>
        <strain>AX4</strain>
    </source>
</reference>
<reference key="2">
    <citation type="submission" date="2010-01" db="UniProtKB">
        <authorList>
            <person name="Bienvenut W.V."/>
            <person name="Veltman D.M."/>
            <person name="Insall R.H."/>
        </authorList>
    </citation>
    <scope>PROTEIN SEQUENCE OF 2-10; 32-41 AND 133-145</scope>
    <scope>CLEAVAGE OF INITIATOR METHIONINE</scope>
    <scope>ACETYLATION AT THR-2</scope>
    <scope>IDENTIFICATION BY MASS SPECTROMETRY</scope>
</reference>
<proteinExistence type="evidence at protein level"/>
<sequence>MTSEVALFGKWSYSGVTCPDISLQDYICVKKNVFTPHSAGRYNKVRFRKAQCPIVERLANSMMMFGRNAGKKVMAVRIIEQAFEIIYLLTDKNPLQVLVEAVMNSGPREDSTRIGSAGTVRRQAVDVSPMRRVNHAVYLLTQGTRAAAFRNIRTVAECLADELINASKGSPNSYSIKQKDALERTAKSHR</sequence>
<keyword id="KW-0007">Acetylation</keyword>
<keyword id="KW-0963">Cytoplasm</keyword>
<keyword id="KW-0903">Direct protein sequencing</keyword>
<keyword id="KW-0539">Nucleus</keyword>
<keyword id="KW-1185">Reference proteome</keyword>
<keyword id="KW-0687">Ribonucleoprotein</keyword>
<keyword id="KW-0689">Ribosomal protein</keyword>
<dbReference type="EMBL" id="AAFI02000085">
    <property type="protein sequence ID" value="EAL64416.1"/>
    <property type="molecule type" value="Genomic_DNA"/>
</dbReference>
<dbReference type="RefSeq" id="XP_637928.1">
    <property type="nucleotide sequence ID" value="XM_632836.1"/>
</dbReference>
<dbReference type="SMR" id="Q54MA6"/>
<dbReference type="FunCoup" id="Q54MA6">
    <property type="interactions" value="607"/>
</dbReference>
<dbReference type="STRING" id="44689.Q54MA6"/>
<dbReference type="PaxDb" id="44689-DDB0230022"/>
<dbReference type="EnsemblProtists" id="EAL64416">
    <property type="protein sequence ID" value="EAL64416"/>
    <property type="gene ID" value="DDB_G0286075"/>
</dbReference>
<dbReference type="GeneID" id="8625439"/>
<dbReference type="KEGG" id="ddi:DDB_G0286075"/>
<dbReference type="dictyBase" id="DDB_G0286075">
    <property type="gene designation" value="rps5"/>
</dbReference>
<dbReference type="VEuPathDB" id="AmoebaDB:DDB_G0286075"/>
<dbReference type="eggNOG" id="KOG3291">
    <property type="taxonomic scope" value="Eukaryota"/>
</dbReference>
<dbReference type="HOGENOM" id="CLU_063975_0_0_1"/>
<dbReference type="InParanoid" id="Q54MA6"/>
<dbReference type="OMA" id="KMNIVER"/>
<dbReference type="PhylomeDB" id="Q54MA6"/>
<dbReference type="Reactome" id="R-DDI-156827">
    <property type="pathway name" value="L13a-mediated translational silencing of Ceruloplasmin expression"/>
</dbReference>
<dbReference type="Reactome" id="R-DDI-1799339">
    <property type="pathway name" value="SRP-dependent cotranslational protein targeting to membrane"/>
</dbReference>
<dbReference type="Reactome" id="R-DDI-72689">
    <property type="pathway name" value="Formation of a pool of free 40S subunits"/>
</dbReference>
<dbReference type="Reactome" id="R-DDI-72695">
    <property type="pathway name" value="Formation of the ternary complex, and subsequently, the 43S complex"/>
</dbReference>
<dbReference type="Reactome" id="R-DDI-72702">
    <property type="pathway name" value="Ribosomal scanning and start codon recognition"/>
</dbReference>
<dbReference type="Reactome" id="R-DDI-72706">
    <property type="pathway name" value="GTP hydrolysis and joining of the 60S ribosomal subunit"/>
</dbReference>
<dbReference type="Reactome" id="R-DDI-975956">
    <property type="pathway name" value="Nonsense Mediated Decay (NMD) independent of the Exon Junction Complex (EJC)"/>
</dbReference>
<dbReference type="Reactome" id="R-DDI-975957">
    <property type="pathway name" value="Nonsense Mediated Decay (NMD) enhanced by the Exon Junction Complex (EJC)"/>
</dbReference>
<dbReference type="PRO" id="PR:Q54MA6"/>
<dbReference type="Proteomes" id="UP000002195">
    <property type="component" value="Chromosome 4"/>
</dbReference>
<dbReference type="GO" id="GO:0022627">
    <property type="term" value="C:cytosolic small ribosomal subunit"/>
    <property type="evidence" value="ECO:0000318"/>
    <property type="project" value="GO_Central"/>
</dbReference>
<dbReference type="GO" id="GO:0031012">
    <property type="term" value="C:extracellular matrix"/>
    <property type="evidence" value="ECO:0007005"/>
    <property type="project" value="dictyBase"/>
</dbReference>
<dbReference type="GO" id="GO:0005730">
    <property type="term" value="C:nucleolus"/>
    <property type="evidence" value="ECO:0007669"/>
    <property type="project" value="UniProtKB-SubCell"/>
</dbReference>
<dbReference type="GO" id="GO:0045335">
    <property type="term" value="C:phagocytic vesicle"/>
    <property type="evidence" value="ECO:0007005"/>
    <property type="project" value="dictyBase"/>
</dbReference>
<dbReference type="GO" id="GO:0005840">
    <property type="term" value="C:ribosome"/>
    <property type="evidence" value="ECO:0000318"/>
    <property type="project" value="GO_Central"/>
</dbReference>
<dbReference type="GO" id="GO:0032040">
    <property type="term" value="C:small-subunit processome"/>
    <property type="evidence" value="ECO:0000250"/>
    <property type="project" value="UniProtKB"/>
</dbReference>
<dbReference type="GO" id="GO:0003729">
    <property type="term" value="F:mRNA binding"/>
    <property type="evidence" value="ECO:0000318"/>
    <property type="project" value="GO_Central"/>
</dbReference>
<dbReference type="GO" id="GO:0003723">
    <property type="term" value="F:RNA binding"/>
    <property type="evidence" value="ECO:0000250"/>
    <property type="project" value="dictyBase"/>
</dbReference>
<dbReference type="GO" id="GO:0019843">
    <property type="term" value="F:rRNA binding"/>
    <property type="evidence" value="ECO:0000318"/>
    <property type="project" value="GO_Central"/>
</dbReference>
<dbReference type="GO" id="GO:0003735">
    <property type="term" value="F:structural constituent of ribosome"/>
    <property type="evidence" value="ECO:0000250"/>
    <property type="project" value="dictyBase"/>
</dbReference>
<dbReference type="GO" id="GO:0000028">
    <property type="term" value="P:ribosomal small subunit assembly"/>
    <property type="evidence" value="ECO:0000318"/>
    <property type="project" value="GO_Central"/>
</dbReference>
<dbReference type="GO" id="GO:0042274">
    <property type="term" value="P:ribosomal small subunit biogenesis"/>
    <property type="evidence" value="ECO:0000250"/>
    <property type="project" value="UniProtKB"/>
</dbReference>
<dbReference type="GO" id="GO:0006412">
    <property type="term" value="P:translation"/>
    <property type="evidence" value="ECO:0000250"/>
    <property type="project" value="dictyBase"/>
</dbReference>
<dbReference type="CDD" id="cd14867">
    <property type="entry name" value="uS7_Eukaryote"/>
    <property type="match status" value="1"/>
</dbReference>
<dbReference type="FunFam" id="1.10.455.10:FF:000002">
    <property type="entry name" value="40S ribosomal protein S5"/>
    <property type="match status" value="1"/>
</dbReference>
<dbReference type="Gene3D" id="1.10.455.10">
    <property type="entry name" value="Ribosomal protein S7 domain"/>
    <property type="match status" value="1"/>
</dbReference>
<dbReference type="InterPro" id="IPR000235">
    <property type="entry name" value="Ribosomal_uS7"/>
</dbReference>
<dbReference type="InterPro" id="IPR020606">
    <property type="entry name" value="Ribosomal_uS7_CS"/>
</dbReference>
<dbReference type="InterPro" id="IPR023798">
    <property type="entry name" value="Ribosomal_uS7_dom"/>
</dbReference>
<dbReference type="InterPro" id="IPR036823">
    <property type="entry name" value="Ribosomal_uS7_dom_sf"/>
</dbReference>
<dbReference type="InterPro" id="IPR005716">
    <property type="entry name" value="Ribosomal_uS7_euk/arc"/>
</dbReference>
<dbReference type="NCBIfam" id="NF003106">
    <property type="entry name" value="PRK04027.1"/>
    <property type="match status" value="1"/>
</dbReference>
<dbReference type="NCBIfam" id="TIGR01028">
    <property type="entry name" value="uS7_euk_arch"/>
    <property type="match status" value="1"/>
</dbReference>
<dbReference type="PANTHER" id="PTHR11205">
    <property type="entry name" value="RIBOSOMAL PROTEIN S7"/>
    <property type="match status" value="1"/>
</dbReference>
<dbReference type="Pfam" id="PF00177">
    <property type="entry name" value="Ribosomal_S7"/>
    <property type="match status" value="1"/>
</dbReference>
<dbReference type="PIRSF" id="PIRSF002122">
    <property type="entry name" value="RPS7p_RPS7a_RPS5e_RPS7o"/>
    <property type="match status" value="1"/>
</dbReference>
<dbReference type="SUPFAM" id="SSF47973">
    <property type="entry name" value="Ribosomal protein S7"/>
    <property type="match status" value="1"/>
</dbReference>
<dbReference type="PROSITE" id="PS00052">
    <property type="entry name" value="RIBOSOMAL_S7"/>
    <property type="match status" value="1"/>
</dbReference>
<protein>
    <recommendedName>
        <fullName evidence="4">Small ribosomal subunit protein uS7</fullName>
    </recommendedName>
    <alternativeName>
        <fullName>40S ribosomal protein S5</fullName>
    </alternativeName>
</protein>